<organism>
    <name type="scientific">Homo sapiens</name>
    <name type="common">Human</name>
    <dbReference type="NCBI Taxonomy" id="9606"/>
    <lineage>
        <taxon>Eukaryota</taxon>
        <taxon>Metazoa</taxon>
        <taxon>Chordata</taxon>
        <taxon>Craniata</taxon>
        <taxon>Vertebrata</taxon>
        <taxon>Euteleostomi</taxon>
        <taxon>Mammalia</taxon>
        <taxon>Eutheria</taxon>
        <taxon>Euarchontoglires</taxon>
        <taxon>Primates</taxon>
        <taxon>Haplorrhini</taxon>
        <taxon>Catarrhini</taxon>
        <taxon>Hominidae</taxon>
        <taxon>Homo</taxon>
    </lineage>
</organism>
<protein>
    <recommendedName>
        <fullName>Lysophosphatidic acid receptor 6</fullName>
        <shortName>LPA receptor 6</shortName>
        <shortName>LPA-6</shortName>
    </recommendedName>
    <alternativeName>
        <fullName>Oleoyl-L-alpha-lysophosphatidic acid receptor</fullName>
    </alternativeName>
    <alternativeName>
        <fullName>P2Y purinoceptor 5</fullName>
        <shortName>P2Y5</shortName>
    </alternativeName>
    <alternativeName>
        <fullName>Purinergic receptor 5</fullName>
    </alternativeName>
    <alternativeName>
        <fullName>RB intron encoded G-protein coupled receptor</fullName>
    </alternativeName>
</protein>
<gene>
    <name type="primary">LPAR6</name>
    <name type="synonym">P2RY5</name>
</gene>
<evidence type="ECO:0000250" key="1"/>
<evidence type="ECO:0000255" key="2"/>
<evidence type="ECO:0000255" key="3">
    <source>
        <dbReference type="PROSITE-ProRule" id="PRU00521"/>
    </source>
</evidence>
<evidence type="ECO:0000269" key="4">
    <source>
    </source>
</evidence>
<evidence type="ECO:0000269" key="5">
    <source>
    </source>
</evidence>
<evidence type="ECO:0000269" key="6">
    <source>
    </source>
</evidence>
<evidence type="ECO:0000269" key="7">
    <source>
    </source>
</evidence>
<evidence type="ECO:0000269" key="8">
    <source>
    </source>
</evidence>
<evidence type="ECO:0000269" key="9">
    <source>
    </source>
</evidence>
<evidence type="ECO:0000269" key="10">
    <source>
    </source>
</evidence>
<evidence type="ECO:0000269" key="11">
    <source>
    </source>
</evidence>
<evidence type="ECO:0000269" key="12">
    <source>
    </source>
</evidence>
<evidence type="ECO:0000269" key="13">
    <source>
    </source>
</evidence>
<evidence type="ECO:0000269" key="14">
    <source ref="8"/>
</evidence>
<evidence type="ECO:0000305" key="15"/>
<accession>P43657</accession>
<accession>A4FTW9</accession>
<accession>B3KVF2</accession>
<accession>F2YGU4</accession>
<accession>O15133</accession>
<accession>Q3KPF5</accession>
<accession>Q53FA0</accession>
<accession>Q5VW44</accession>
<accession>Q7Z3S0</accession>
<accession>Q7Z3S6</accession>
<name>LPAR6_HUMAN</name>
<reference key="1">
    <citation type="journal article" date="1993" name="Genomics">
        <title>Complete genomic sequence of the human retinoblastoma susceptibility gene.</title>
        <authorList>
            <person name="Toguchida J."/>
            <person name="McGee T.L."/>
            <person name="Paterson J.C."/>
            <person name="Eagle J.R."/>
            <person name="Tucker S."/>
            <person name="Yandell D.W."/>
            <person name="Dryja T.P."/>
        </authorList>
    </citation>
    <scope>NUCLEOTIDE SEQUENCE [GENOMIC DNA]</scope>
</reference>
<reference key="2">
    <citation type="journal article" date="1996" name="Genome Res.">
        <title>Intron 17 of the human retinoblastoma susceptibility gene encodes an actively transcribed G protein-coupled receptor gene.</title>
        <authorList>
            <person name="Herzog H."/>
            <person name="Darby K."/>
            <person name="Hort Y.J."/>
            <person name="Shine J."/>
        </authorList>
    </citation>
    <scope>NUCLEOTIDE SEQUENCE [GENOMIC DNA]</scope>
</reference>
<reference key="3">
    <citation type="submission" date="1997-07" db="EMBL/GenBank/DDBJ databases">
        <title>The human purinergic receptor P2Y5 is encoded in intron 17 of the retinoblastoma gene.</title>
        <authorList>
            <person name="Bohm S.K."/>
            <person name="Trumpp A."/>
            <person name="Khitin L.M."/>
            <person name="Kong W."/>
            <person name="Payan D.G."/>
            <person name="Bunnett N.W."/>
        </authorList>
    </citation>
    <scope>NUCLEOTIDE SEQUENCE [MRNA]</scope>
</reference>
<reference key="4">
    <citation type="journal article" date="2007" name="BMC Genomics">
        <title>The full-ORF clone resource of the German cDNA consortium.</title>
        <authorList>
            <person name="Bechtel S."/>
            <person name="Rosenfelder H."/>
            <person name="Duda A."/>
            <person name="Schmidt C.P."/>
            <person name="Ernst U."/>
            <person name="Wellenreuther R."/>
            <person name="Mehrle A."/>
            <person name="Schuster C."/>
            <person name="Bahr A."/>
            <person name="Bloecker H."/>
            <person name="Heubner D."/>
            <person name="Hoerlein A."/>
            <person name="Michel G."/>
            <person name="Wedler H."/>
            <person name="Koehrer K."/>
            <person name="Ottenwaelder B."/>
            <person name="Poustka A."/>
            <person name="Wiemann S."/>
            <person name="Schupp I."/>
        </authorList>
    </citation>
    <scope>NUCLEOTIDE SEQUENCE [LARGE SCALE MRNA]</scope>
    <source>
        <tissue>Endometrium</tissue>
        <tissue>Heart</tissue>
    </source>
</reference>
<reference key="5">
    <citation type="journal article" date="2004" name="Nat. Genet.">
        <title>Complete sequencing and characterization of 21,243 full-length human cDNAs.</title>
        <authorList>
            <person name="Ota T."/>
            <person name="Suzuki Y."/>
            <person name="Nishikawa T."/>
            <person name="Otsuki T."/>
            <person name="Sugiyama T."/>
            <person name="Irie R."/>
            <person name="Wakamatsu A."/>
            <person name="Hayashi K."/>
            <person name="Sato H."/>
            <person name="Nagai K."/>
            <person name="Kimura K."/>
            <person name="Makita H."/>
            <person name="Sekine M."/>
            <person name="Obayashi M."/>
            <person name="Nishi T."/>
            <person name="Shibahara T."/>
            <person name="Tanaka T."/>
            <person name="Ishii S."/>
            <person name="Yamamoto J."/>
            <person name="Saito K."/>
            <person name="Kawai Y."/>
            <person name="Isono Y."/>
            <person name="Nakamura Y."/>
            <person name="Nagahari K."/>
            <person name="Murakami K."/>
            <person name="Yasuda T."/>
            <person name="Iwayanagi T."/>
            <person name="Wagatsuma M."/>
            <person name="Shiratori A."/>
            <person name="Sudo H."/>
            <person name="Hosoiri T."/>
            <person name="Kaku Y."/>
            <person name="Kodaira H."/>
            <person name="Kondo H."/>
            <person name="Sugawara M."/>
            <person name="Takahashi M."/>
            <person name="Kanda K."/>
            <person name="Yokoi T."/>
            <person name="Furuya T."/>
            <person name="Kikkawa E."/>
            <person name="Omura Y."/>
            <person name="Abe K."/>
            <person name="Kamihara K."/>
            <person name="Katsuta N."/>
            <person name="Sato K."/>
            <person name="Tanikawa M."/>
            <person name="Yamazaki M."/>
            <person name="Ninomiya K."/>
            <person name="Ishibashi T."/>
            <person name="Yamashita H."/>
            <person name="Murakawa K."/>
            <person name="Fujimori K."/>
            <person name="Tanai H."/>
            <person name="Kimata M."/>
            <person name="Watanabe M."/>
            <person name="Hiraoka S."/>
            <person name="Chiba Y."/>
            <person name="Ishida S."/>
            <person name="Ono Y."/>
            <person name="Takiguchi S."/>
            <person name="Watanabe S."/>
            <person name="Yosida M."/>
            <person name="Hotuta T."/>
            <person name="Kusano J."/>
            <person name="Kanehori K."/>
            <person name="Takahashi-Fujii A."/>
            <person name="Hara H."/>
            <person name="Tanase T.-O."/>
            <person name="Nomura Y."/>
            <person name="Togiya S."/>
            <person name="Komai F."/>
            <person name="Hara R."/>
            <person name="Takeuchi K."/>
            <person name="Arita M."/>
            <person name="Imose N."/>
            <person name="Musashino K."/>
            <person name="Yuuki H."/>
            <person name="Oshima A."/>
            <person name="Sasaki N."/>
            <person name="Aotsuka S."/>
            <person name="Yoshikawa Y."/>
            <person name="Matsunawa H."/>
            <person name="Ichihara T."/>
            <person name="Shiohata N."/>
            <person name="Sano S."/>
            <person name="Moriya S."/>
            <person name="Momiyama H."/>
            <person name="Satoh N."/>
            <person name="Takami S."/>
            <person name="Terashima Y."/>
            <person name="Suzuki O."/>
            <person name="Nakagawa S."/>
            <person name="Senoh A."/>
            <person name="Mizoguchi H."/>
            <person name="Goto Y."/>
            <person name="Shimizu F."/>
            <person name="Wakebe H."/>
            <person name="Hishigaki H."/>
            <person name="Watanabe T."/>
            <person name="Sugiyama A."/>
            <person name="Takemoto M."/>
            <person name="Kawakami B."/>
            <person name="Yamazaki M."/>
            <person name="Watanabe K."/>
            <person name="Kumagai A."/>
            <person name="Itakura S."/>
            <person name="Fukuzumi Y."/>
            <person name="Fujimori Y."/>
            <person name="Komiyama M."/>
            <person name="Tashiro H."/>
            <person name="Tanigami A."/>
            <person name="Fujiwara T."/>
            <person name="Ono T."/>
            <person name="Yamada K."/>
            <person name="Fujii Y."/>
            <person name="Ozaki K."/>
            <person name="Hirao M."/>
            <person name="Ohmori Y."/>
            <person name="Kawabata A."/>
            <person name="Hikiji T."/>
            <person name="Kobatake N."/>
            <person name="Inagaki H."/>
            <person name="Ikema Y."/>
            <person name="Okamoto S."/>
            <person name="Okitani R."/>
            <person name="Kawakami T."/>
            <person name="Noguchi S."/>
            <person name="Itoh T."/>
            <person name="Shigeta K."/>
            <person name="Senba T."/>
            <person name="Matsumura K."/>
            <person name="Nakajima Y."/>
            <person name="Mizuno T."/>
            <person name="Morinaga M."/>
            <person name="Sasaki M."/>
            <person name="Togashi T."/>
            <person name="Oyama M."/>
            <person name="Hata H."/>
            <person name="Watanabe M."/>
            <person name="Komatsu T."/>
            <person name="Mizushima-Sugano J."/>
            <person name="Satoh T."/>
            <person name="Shirai Y."/>
            <person name="Takahashi Y."/>
            <person name="Nakagawa K."/>
            <person name="Okumura K."/>
            <person name="Nagase T."/>
            <person name="Nomura N."/>
            <person name="Kikuchi H."/>
            <person name="Masuho Y."/>
            <person name="Yamashita R."/>
            <person name="Nakai K."/>
            <person name="Yada T."/>
            <person name="Nakamura Y."/>
            <person name="Ohara O."/>
            <person name="Isogai T."/>
            <person name="Sugano S."/>
        </authorList>
    </citation>
    <scope>NUCLEOTIDE SEQUENCE [LARGE SCALE MRNA]</scope>
    <source>
        <tissue>Subthalamic nucleus</tissue>
    </source>
</reference>
<reference key="6">
    <citation type="submission" date="2005-04" db="EMBL/GenBank/DDBJ databases">
        <authorList>
            <person name="Totoki Y."/>
            <person name="Toyoda A."/>
            <person name="Takeda T."/>
            <person name="Sakaki Y."/>
            <person name="Tanaka A."/>
            <person name="Yokoyama S."/>
        </authorList>
    </citation>
    <scope>NUCLEOTIDE SEQUENCE [LARGE SCALE MRNA]</scope>
    <source>
        <tissue>Thymus</tissue>
    </source>
</reference>
<reference key="7">
    <citation type="submission" date="2011-04" db="EMBL/GenBank/DDBJ databases">
        <authorList>
            <person name="Kaighin V.A."/>
            <person name="Martin A.L."/>
            <person name="Aronstam R.S."/>
        </authorList>
    </citation>
    <scope>NUCLEOTIDE SEQUENCE [LARGE SCALE MRNA]</scope>
    <source>
        <tissue>Peripheral blood leukocyte</tissue>
    </source>
</reference>
<reference key="8">
    <citation type="submission" date="2002-10" db="EMBL/GenBank/DDBJ databases">
        <authorList>
            <consortium name="NIEHS SNPs program"/>
        </authorList>
    </citation>
    <scope>NUCLEOTIDE SEQUENCE [GENOMIC DNA]</scope>
    <scope>VARIANT TRP-137</scope>
</reference>
<reference key="9">
    <citation type="journal article" date="2004" name="Nature">
        <title>The DNA sequence and analysis of human chromosome 13.</title>
        <authorList>
            <person name="Dunham A."/>
            <person name="Matthews L.H."/>
            <person name="Burton J."/>
            <person name="Ashurst J.L."/>
            <person name="Howe K.L."/>
            <person name="Ashcroft K.J."/>
            <person name="Beare D.M."/>
            <person name="Burford D.C."/>
            <person name="Hunt S.E."/>
            <person name="Griffiths-Jones S."/>
            <person name="Jones M.C."/>
            <person name="Keenan S.J."/>
            <person name="Oliver K."/>
            <person name="Scott C.E."/>
            <person name="Ainscough R."/>
            <person name="Almeida J.P."/>
            <person name="Ambrose K.D."/>
            <person name="Andrews D.T."/>
            <person name="Ashwell R.I.S."/>
            <person name="Babbage A.K."/>
            <person name="Bagguley C.L."/>
            <person name="Bailey J."/>
            <person name="Bannerjee R."/>
            <person name="Barlow K.F."/>
            <person name="Bates K."/>
            <person name="Beasley H."/>
            <person name="Bird C.P."/>
            <person name="Bray-Allen S."/>
            <person name="Brown A.J."/>
            <person name="Brown J.Y."/>
            <person name="Burrill W."/>
            <person name="Carder C."/>
            <person name="Carter N.P."/>
            <person name="Chapman J.C."/>
            <person name="Clamp M.E."/>
            <person name="Clark S.Y."/>
            <person name="Clarke G."/>
            <person name="Clee C.M."/>
            <person name="Clegg S.C."/>
            <person name="Cobley V."/>
            <person name="Collins J.E."/>
            <person name="Corby N."/>
            <person name="Coville G.J."/>
            <person name="Deloukas P."/>
            <person name="Dhami P."/>
            <person name="Dunham I."/>
            <person name="Dunn M."/>
            <person name="Earthrowl M.E."/>
            <person name="Ellington A.G."/>
            <person name="Faulkner L."/>
            <person name="Frankish A.G."/>
            <person name="Frankland J."/>
            <person name="French L."/>
            <person name="Garner P."/>
            <person name="Garnett J."/>
            <person name="Gilbert J.G.R."/>
            <person name="Gilson C.J."/>
            <person name="Ghori J."/>
            <person name="Grafham D.V."/>
            <person name="Gribble S.M."/>
            <person name="Griffiths C."/>
            <person name="Hall R.E."/>
            <person name="Hammond S."/>
            <person name="Harley J.L."/>
            <person name="Hart E.A."/>
            <person name="Heath P.D."/>
            <person name="Howden P.J."/>
            <person name="Huckle E.J."/>
            <person name="Hunt P.J."/>
            <person name="Hunt A.R."/>
            <person name="Johnson C."/>
            <person name="Johnson D."/>
            <person name="Kay M."/>
            <person name="Kimberley A.M."/>
            <person name="King A."/>
            <person name="Laird G.K."/>
            <person name="Langford C.J."/>
            <person name="Lawlor S."/>
            <person name="Leongamornlert D.A."/>
            <person name="Lloyd D.M."/>
            <person name="Lloyd C."/>
            <person name="Loveland J.E."/>
            <person name="Lovell J."/>
            <person name="Martin S."/>
            <person name="Mashreghi-Mohammadi M."/>
            <person name="McLaren S.J."/>
            <person name="McMurray A."/>
            <person name="Milne S."/>
            <person name="Moore M.J.F."/>
            <person name="Nickerson T."/>
            <person name="Palmer S.A."/>
            <person name="Pearce A.V."/>
            <person name="Peck A.I."/>
            <person name="Pelan S."/>
            <person name="Phillimore B."/>
            <person name="Porter K.M."/>
            <person name="Rice C.M."/>
            <person name="Searle S."/>
            <person name="Sehra H.K."/>
            <person name="Shownkeen R."/>
            <person name="Skuce C.D."/>
            <person name="Smith M."/>
            <person name="Steward C.A."/>
            <person name="Sycamore N."/>
            <person name="Tester J."/>
            <person name="Thomas D.W."/>
            <person name="Tracey A."/>
            <person name="Tromans A."/>
            <person name="Tubby B."/>
            <person name="Wall M."/>
            <person name="Wallis J.M."/>
            <person name="West A.P."/>
            <person name="Whitehead S.L."/>
            <person name="Willey D.L."/>
            <person name="Wilming L."/>
            <person name="Wray P.W."/>
            <person name="Wright M.W."/>
            <person name="Young L."/>
            <person name="Coulson A."/>
            <person name="Durbin R.M."/>
            <person name="Hubbard T."/>
            <person name="Sulston J.E."/>
            <person name="Beck S."/>
            <person name="Bentley D.R."/>
            <person name="Rogers J."/>
            <person name="Ross M.T."/>
        </authorList>
    </citation>
    <scope>NUCLEOTIDE SEQUENCE [LARGE SCALE GENOMIC DNA]</scope>
</reference>
<reference key="10">
    <citation type="submission" date="2005-07" db="EMBL/GenBank/DDBJ databases">
        <authorList>
            <person name="Mural R.J."/>
            <person name="Istrail S."/>
            <person name="Sutton G.G."/>
            <person name="Florea L."/>
            <person name="Halpern A.L."/>
            <person name="Mobarry C.M."/>
            <person name="Lippert R."/>
            <person name="Walenz B."/>
            <person name="Shatkay H."/>
            <person name="Dew I."/>
            <person name="Miller J.R."/>
            <person name="Flanigan M.J."/>
            <person name="Edwards N.J."/>
            <person name="Bolanos R."/>
            <person name="Fasulo D."/>
            <person name="Halldorsson B.V."/>
            <person name="Hannenhalli S."/>
            <person name="Turner R."/>
            <person name="Yooseph S."/>
            <person name="Lu F."/>
            <person name="Nusskern D.R."/>
            <person name="Shue B.C."/>
            <person name="Zheng X.H."/>
            <person name="Zhong F."/>
            <person name="Delcher A.L."/>
            <person name="Huson D.H."/>
            <person name="Kravitz S.A."/>
            <person name="Mouchard L."/>
            <person name="Reinert K."/>
            <person name="Remington K.A."/>
            <person name="Clark A.G."/>
            <person name="Waterman M.S."/>
            <person name="Eichler E.E."/>
            <person name="Adams M.D."/>
            <person name="Hunkapiller M.W."/>
            <person name="Myers E.W."/>
            <person name="Venter J.C."/>
        </authorList>
    </citation>
    <scope>NUCLEOTIDE SEQUENCE [LARGE SCALE GENOMIC DNA]</scope>
</reference>
<reference key="11">
    <citation type="journal article" date="2004" name="Genome Res.">
        <title>The status, quality, and expansion of the NIH full-length cDNA project: the Mammalian Gene Collection (MGC).</title>
        <authorList>
            <consortium name="The MGC Project Team"/>
        </authorList>
    </citation>
    <scope>NUCLEOTIDE SEQUENCE [LARGE SCALE MRNA]</scope>
    <source>
        <tissue>Brain</tissue>
        <tissue>Placenta</tissue>
        <tissue>Testis</tissue>
    </source>
</reference>
<reference key="12">
    <citation type="journal article" date="2000" name="Biochim. Biophys. Acta">
        <title>Expression of purinergic receptors (ionotropic P2X1-7 and metabotropic P2Y1-11) during myeloid differentiation of HL60 cells.</title>
        <authorList>
            <person name="Adrian K."/>
            <person name="Bernhard M.K."/>
            <person name="Breitinger H.-G."/>
            <person name="Ogilvie A."/>
        </authorList>
    </citation>
    <scope>TISSUE SPECIFICITY</scope>
    <scope>DEVELOPMENTAL STAGE</scope>
</reference>
<reference key="13">
    <citation type="journal article" date="2008" name="Nat. Genet.">
        <title>G protein-coupled receptor P2Y5 and its ligand LPA are involved in maintenance of human hair growth.</title>
        <authorList>
            <person name="Pasternack S.M."/>
            <person name="von Kuegelgen I."/>
            <person name="Aboud K.A."/>
            <person name="Lee Y.-A."/>
            <person name="Rueschendorf F."/>
            <person name="Voss K."/>
            <person name="Hillmer A.M."/>
            <person name="Molderings G.J."/>
            <person name="Franz T."/>
            <person name="Ramirez A."/>
            <person name="Nuernberg P."/>
            <person name="Noethen M.M."/>
            <person name="Betz R.C."/>
        </authorList>
    </citation>
    <scope>FUNCTION</scope>
    <scope>SUBCELLULAR LOCATION</scope>
    <scope>TISSUE SPECIFICITY</scope>
    <scope>INVOLVEMENT IN HYPT8</scope>
</reference>
<reference key="14">
    <citation type="journal article" date="2008" name="Genomics">
        <title>Genome-wide linkage analysis of an autosomal recessive hypotrichosis identifies a novel P2RY5 mutation.</title>
        <authorList>
            <person name="Petukhova L."/>
            <person name="Sousa E.C. Jr."/>
            <person name="Martinez-Mir A."/>
            <person name="Vitebsky A."/>
            <person name="Dos Santos L.G."/>
            <person name="Shapiro L."/>
            <person name="Haynes C."/>
            <person name="Gordon D."/>
            <person name="Shimomura Y."/>
            <person name="Christiano A.M."/>
        </authorList>
    </citation>
    <scope>VARIANT ARWH1 TYR-278</scope>
</reference>
<reference key="15">
    <citation type="journal article" date="2008" name="Hum. Genet.">
        <title>Novel mutations in G protein-coupled receptor gene (P2RY5) in families with autosomal recessive hypotrichosis (LAH3).</title>
        <authorList>
            <person name="Azeem Z."/>
            <person name="Jelani M."/>
            <person name="Naz G."/>
            <person name="Tariq M."/>
            <person name="Wasif N."/>
            <person name="Kamran-Ul-Hassan Naqvi S."/>
            <person name="Ayub M."/>
            <person name="Yasinzai M."/>
            <person name="Amin-Ud-Din M."/>
            <person name="Wali A."/>
            <person name="Ali G."/>
            <person name="Chishti M.S."/>
            <person name="Ahmad W."/>
        </authorList>
    </citation>
    <scope>VARIANTS HYPT8 THR-3; VAL-63; ARG-146 AND LYS-189</scope>
    <scope>INVOLVEMENT IN HYPT8</scope>
</reference>
<reference key="16">
    <citation type="journal article" date="2008" name="Nat. Genet.">
        <title>Disruption of P2RY5, an orphan G protein-coupled receptor, underlies autosomal recessive woolly hair.</title>
        <authorList>
            <person name="Shimomura Y."/>
            <person name="Wajid M."/>
            <person name="Ishii Y."/>
            <person name="Shapiro L."/>
            <person name="Petukhova L."/>
            <person name="Gordon D."/>
            <person name="Christiano A.M."/>
        </authorList>
    </citation>
    <scope>VARIANTS ARWH1 VAL-63; PHE-188 AND LYS-189</scope>
    <scope>TISSUE SPECIFICITY</scope>
</reference>
<reference key="17">
    <citation type="journal article" date="2009" name="Br. J. Dermatol.">
        <title>Mutations in the P2RY5 gene underlie autosomal recessive hypotrichosis in 13 Pakistani families.</title>
        <authorList>
            <person name="Tariq M."/>
            <person name="Ayub M."/>
            <person name="Jelani M."/>
            <person name="Basit S."/>
            <person name="Naz G."/>
            <person name="Wasif N."/>
            <person name="Raza S.I."/>
            <person name="Naveed A.K."/>
            <person name="ullah Khan S."/>
            <person name="Azeem Z."/>
            <person name="Yasinzai M."/>
            <person name="Wali A."/>
            <person name="Ali G."/>
            <person name="Chishti M.S."/>
            <person name="Ahmad W."/>
        </authorList>
    </citation>
    <scope>VARIANTS HYPT8 VAL-63; ARG-146; PHE-188; TYR-248 AND PRO-277</scope>
</reference>
<reference key="18">
    <citation type="journal article" date="2011" name="Clin. Exp. Dermatol.">
        <title>A novel mutation in LPAR6 causes autosomal recessive hypotrichosis of the scalp.</title>
        <authorList>
            <person name="Nahum S."/>
            <person name="Morice-Picard F."/>
            <person name="Taieb A."/>
            <person name="Sprecher E."/>
        </authorList>
    </citation>
    <scope>VARIANT HYPT8 LEU-196</scope>
</reference>
<reference key="19">
    <citation type="journal article" date="2011" name="Clin. Exp. Dermatol.">
        <title>Mutations in the LPAR6 and LIPH genes underlie autosomal recessive hypotrichosis/woolly hair in 17 consanguineous families from Pakistan.</title>
        <authorList>
            <person name="Khan S."/>
            <person name="Habib R."/>
            <person name="Mir H."/>
            <person name="Kalsoom U."/>
            <person name="Naz G."/>
            <person name="Ayub M."/>
            <person name="Shafique S."/>
            <person name="Yamin T."/>
            <person name="Ali N."/>
            <person name="Basit S."/>
            <person name="Wasif N."/>
            <person name="Kamran-Ul-Hassan Naqvi S."/>
            <person name="Ali G."/>
            <person name="Wali A."/>
            <person name="Ansar M."/>
            <person name="Ahmad W."/>
        </authorList>
    </citation>
    <scope>VARIANTS ARWH1 VAL-63 AND PHE-188</scope>
    <scope>VARIANT HYPT8 ARG-146</scope>
</reference>
<reference key="20">
    <citation type="journal article" date="2018" name="Congenit. Anom. (Kyoto)">
        <title>Novel sequence variants in the LIPH and LPAR6 genes underlies autosomal recessive woolly hair/hypotrichosis in consanguineous families.</title>
        <authorList>
            <person name="Ahmad F."/>
            <person name="Sharif S."/>
            <person name="Furqan Ubaid M."/>
            <person name="Shah K."/>
            <person name="Khan M.N."/>
            <person name="Umair M."/>
            <person name="Azeem Z."/>
            <person name="Ahmad W."/>
        </authorList>
    </citation>
    <scope>VARIANT ARWH1 VAL-63</scope>
</reference>
<reference key="21">
    <citation type="journal article" date="2023" name="Hum. Mol. Genet.">
        <title>Cell-trafficking impairment in disease-associated LPA6 missense mutants and a potential pharmacoperone therapy for autosomal recessive woolly hair/hypotrichosis.</title>
        <authorList>
            <person name="Yanagida K."/>
            <person name="Masago K."/>
            <person name="Yasuda D."/>
            <person name="Hamano F."/>
            <person name="Kurikawa Y."/>
            <person name="Shimizu T."/>
            <person name="Ishii S."/>
        </authorList>
    </citation>
    <scope>CHARACTERIZATION OF VARIANTS HYPT8 THR-3; ARG-146; TYR-248 AND PRO-277</scope>
    <scope>CHARACTERIZATION OF VARIANTS ARWH1 VAL-63; PHE-188; LYS-189 AND TYR-278</scope>
    <scope>MUTAGENESIS OF ASN-246</scope>
    <scope>SUBCELLULAR LOCATION</scope>
</reference>
<comment type="function">
    <text evidence="5">Binds to oleoyl-L-alpha-lysophosphatidic acid (LPA). Intracellular cAMP is involved in the receptor activation. Important for the maintenance of hair growth and texture.</text>
</comment>
<comment type="interaction">
    <interactant intactId="EBI-2876949">
        <id>P43657</id>
    </interactant>
    <interactant intactId="EBI-4319440">
        <id>P54849</id>
        <label>EMP1</label>
    </interactant>
    <organismsDiffer>false</organismsDiffer>
    <experiments>3</experiments>
</comment>
<comment type="interaction">
    <interactant intactId="EBI-2876949">
        <id>P43657</id>
    </interactant>
    <interactant intactId="EBI-1052363">
        <id>Q9NS64</id>
        <label>RPRM</label>
    </interactant>
    <organismsDiffer>false</organismsDiffer>
    <experiments>3</experiments>
</comment>
<comment type="interaction">
    <interactant intactId="EBI-2876949">
        <id>P43657</id>
    </interactant>
    <interactant intactId="EBI-8652744">
        <id>Q96IW7</id>
        <label>SEC22A</label>
    </interactant>
    <organismsDiffer>false</organismsDiffer>
    <experiments>3</experiments>
</comment>
<comment type="interaction">
    <interactant intactId="EBI-2876949">
        <id>P43657</id>
    </interactant>
    <interactant intactId="EBI-741850">
        <id>Q9BZL3</id>
        <label>SMIM3</label>
    </interactant>
    <organismsDiffer>false</organismsDiffer>
    <experiments>3</experiments>
</comment>
<comment type="subcellular location">
    <subcellularLocation>
        <location evidence="5 13">Cell membrane</location>
        <topology evidence="5">Multi-pass membrane protein</topology>
    </subcellularLocation>
</comment>
<comment type="tissue specificity">
    <text evidence="4 5 6">Expressed ubiquitously, including in skin and hair follicle cells. Detected in both Henle's and Huxley's layers of the inner root sheath of the hair follicle and in suprabasal layers of the epidermis (at protein level). Expressed at low levels in peripheral blood leukocytes.</text>
</comment>
<comment type="developmental stage">
    <text evidence="4">Markedly up-regulated in promyelocytic HL60 cells induced to differentiate along the monocyte/macrophage pathway. Not detectable in undifferentiated HL60 cells and only low levels after the induction of differentiation along the granulocytic pathway.</text>
</comment>
<comment type="disease" evidence="5 6 7 8 11 12 13">
    <disease id="DI-01263">
        <name>Woolly hair autosomal recessive 1 with or without hypotrichosis</name>
        <acronym>ARWH1</acronym>
        <description>A hair shaft disorder characterized by fine and tightly curled hair. Compared to normal curly hair that is observed in some populations, woolly hair grows slowly and stops growing after a few inches. Under light microscopy, woolly hair shows some structural anomalies, including trichorrhexis nodosa and tapered ends. Some individuals exhibit features of hypotrichosis.</description>
        <dbReference type="MIM" id="278150"/>
    </disease>
    <text>The disease is caused by variants affecting the gene represented in this entry.</text>
</comment>
<comment type="disease" evidence="5 7 9 10 11 13">
    <disease id="DI-01913">
        <name>Hypotrichosis 8</name>
        <acronym>HYPT8</acronym>
        <description>A condition characterized by the presence of less than the normal amount of hair and abnormal hair follicles and shafts, which are thin and atrophic. The disorder affects the trunk and extremities as well as the scalp, and the eyebrows and eyelashes may also be involved, whereas beard, pubic, and axillary hairs are largely spared. In addition, patients can develop hyperkeratotic follicular papules, erythema, and pruritus in affected areas. In some patients with congenital hypotrichosis, monilethrix-like hairs showing elliptical nodes have been observed. HYPT8 inheritance is autosomal recessive.</description>
        <dbReference type="MIM" id="278150"/>
    </disease>
    <text>The disease is caused by variants affecting the gene represented in this entry.</text>
</comment>
<comment type="miscellaneous">
    <text>This is a nested gene within intron 17 of the retinoblastoma gene.</text>
</comment>
<comment type="similarity">
    <text evidence="3">Belongs to the G-protein coupled receptor 1 family.</text>
</comment>
<comment type="sequence caution" evidence="15">
    <conflict type="frameshift">
        <sequence resource="EMBL" id="L11910"/>
    </conflict>
</comment>
<sequence length="344" mass="39392">MVSVNSSHCFYNDSFKYTLYGCMFSMVFVLGLISNCVAIYIFICVLKVRNETTTYMINLAMSDLLFVFTLPFRIFYFTTRNWPFGDLLCKISVMLFYTNMYGSILFLTCISVDRFLAIVYPFKSKTLRTKRNAKIVCTGVWLTVIGGSAPAVFVQSTHSQGNNASEACFENFPEATWKTYLSRIVIFIEIVGFFIPLILNVTCSSMVLKTLTKPVTLSRSKINKTKVLKMIFVHLIIFCFCFVPYNINLILYSLVRTQTFVNCSVVAAVRTMYPITLCIAVSNCCFDPIVYYFTSDTIQNSIKMKNWSVRRSDFRFSEVHGAENFIQHNLQTLKSKIFDNESAA</sequence>
<proteinExistence type="evidence at protein level"/>
<feature type="chain" id="PRO_0000070025" description="Lysophosphatidic acid receptor 6">
    <location>
        <begin position="1"/>
        <end position="344"/>
    </location>
</feature>
<feature type="topological domain" description="Extracellular" evidence="2">
    <location>
        <begin position="1"/>
        <end position="19"/>
    </location>
</feature>
<feature type="transmembrane region" description="Helical; Name=1" evidence="2">
    <location>
        <begin position="20"/>
        <end position="46"/>
    </location>
</feature>
<feature type="topological domain" description="Cytoplasmic" evidence="2">
    <location>
        <begin position="47"/>
        <end position="55"/>
    </location>
</feature>
<feature type="transmembrane region" description="Helical; Name=2" evidence="2">
    <location>
        <begin position="56"/>
        <end position="79"/>
    </location>
</feature>
<feature type="topological domain" description="Extracellular" evidence="2">
    <location>
        <begin position="80"/>
        <end position="92"/>
    </location>
</feature>
<feature type="transmembrane region" description="Helical; Name=3" evidence="2">
    <location>
        <begin position="93"/>
        <end position="112"/>
    </location>
</feature>
<feature type="topological domain" description="Cytoplasmic" evidence="2">
    <location>
        <begin position="113"/>
        <end position="133"/>
    </location>
</feature>
<feature type="transmembrane region" description="Helical; Name=4" evidence="2">
    <location>
        <begin position="134"/>
        <end position="154"/>
    </location>
</feature>
<feature type="topological domain" description="Extracellular" evidence="2">
    <location>
        <begin position="155"/>
        <end position="181"/>
    </location>
</feature>
<feature type="transmembrane region" description="Helical; Name=5" evidence="2">
    <location>
        <begin position="182"/>
        <end position="209"/>
    </location>
</feature>
<feature type="topological domain" description="Cytoplasmic" evidence="2">
    <location>
        <begin position="210"/>
        <end position="227"/>
    </location>
</feature>
<feature type="transmembrane region" description="Helical; Name=6" evidence="2">
    <location>
        <begin position="228"/>
        <end position="253"/>
    </location>
</feature>
<feature type="topological domain" description="Extracellular" evidence="2">
    <location>
        <begin position="254"/>
        <end position="272"/>
    </location>
</feature>
<feature type="transmembrane region" description="Helical; Name=7" evidence="2">
    <location>
        <begin position="273"/>
        <end position="292"/>
    </location>
</feature>
<feature type="topological domain" description="Cytoplasmic" evidence="2">
    <location>
        <begin position="293"/>
        <end position="344"/>
    </location>
</feature>
<feature type="lipid moiety-binding region" description="S-palmitoyl cysteine" evidence="1">
    <location>
        <position position="284"/>
    </location>
</feature>
<feature type="glycosylation site" description="N-linked (GlcNAc...) asparagine" evidence="2">
    <location>
        <position position="5"/>
    </location>
</feature>
<feature type="disulfide bond" evidence="3">
    <location>
        <begin position="89"/>
        <end position="168"/>
    </location>
</feature>
<feature type="sequence variant" id="VAR_088338" description="In HYPT8; uncertain significance; no effect on G protein-coupled receptor signaling; no effect on localization to cell membrane; does not affect protein abundance." evidence="7 13">
    <original>S</original>
    <variation>T</variation>
    <location>
        <position position="3"/>
    </location>
</feature>
<feature type="sequence variant" id="VAR_022636" description="In dbSNP:rs1060585.">
    <original>I</original>
    <variation>V</variation>
    <location>
        <position position="33"/>
    </location>
</feature>
<feature type="sequence variant" id="VAR_044326" description="In ARWH1 and HYPT8; loss of G protein-coupled receptor signaling; reduced localization to cell membrane; decreased protein abundance; increased protein degradation; dbSNP:rs879255262." evidence="6 7 9 11 12 13">
    <original>D</original>
    <variation>V</variation>
    <location>
        <position position="63"/>
    </location>
</feature>
<feature type="sequence variant" id="VAR_016253" description="In dbSNP:rs4151553." evidence="14">
    <original>C</original>
    <variation>W</variation>
    <location>
        <position position="137"/>
    </location>
</feature>
<feature type="sequence variant" id="VAR_088339" description="In HYPT8; loss of G protein-coupled receptor signaling; reduced localization to cell membrane; decreased protein abundance; increased protein degradation." evidence="7 9 11 13">
    <original>G</original>
    <variation>R</variation>
    <location>
        <position position="146"/>
    </location>
</feature>
<feature type="sequence variant" id="VAR_044327" description="In ARWH1 and HYPT8; loss of G protein-coupled receptor signaling; no effect on localization to cell membrane; does not affect protein abundance; dbSNP:rs121434307." evidence="6 9 11 13">
    <original>I</original>
    <variation>F</variation>
    <location>
        <position position="188"/>
    </location>
</feature>
<feature type="sequence variant" id="VAR_044328" description="In ARWH1 and HYPT8; loss of G protein-coupled receptor signaling; no effect on localization to cell membrane; does not affect protein abundance; dbSNP:rs121434309." evidence="6 7 13">
    <original>E</original>
    <variation>K</variation>
    <location>
        <position position="189"/>
    </location>
</feature>
<feature type="sequence variant" id="VAR_088340" description="In HYPT8; uncertain significance." evidence="10">
    <original>P</original>
    <variation>L</variation>
    <location>
        <position position="196"/>
    </location>
</feature>
<feature type="sequence variant" id="VAR_088341" description="In HYPT8; loss of G protein-coupled receptor signaling; no effect on localization to cell membrane; does not affect protein abundance." evidence="9 13">
    <original>N</original>
    <variation>Y</variation>
    <location>
        <position position="248"/>
    </location>
</feature>
<feature type="sequence variant" id="VAR_088342" description="In HYPT8; loss of G protein-coupled receptor signaling; reduced localization to cell membrane; decreased protein abundance; increased protein degradation." evidence="9 13">
    <original>L</original>
    <variation>P</variation>
    <location>
        <position position="277"/>
    </location>
</feature>
<feature type="sequence variant" id="VAR_088343" description="In ARWH1; loss of G protein-coupled receptor signaling; reduced localization to cell membrane; decreased protein abundance; increased protein degradation." evidence="8 13">
    <original>C</original>
    <variation>Y</variation>
    <location>
        <position position="278"/>
    </location>
</feature>
<feature type="sequence variant" id="VAR_049430" description="In dbSNP:rs17071686.">
    <original>W</original>
    <variation>C</variation>
    <location>
        <position position="307"/>
    </location>
</feature>
<feature type="mutagenesis site" description="Loss of G protein-coupled receptor signaling. Reduced localization to cell membrane. Decreased protein abundance. Increased protein degradation." evidence="13">
    <original>N</original>
    <variation>D</variation>
    <location>
        <position position="246"/>
    </location>
</feature>
<feature type="sequence conflict" description="In Ref. 6; BAD97109." evidence="15" ref="6">
    <original>F</original>
    <variation>I</variation>
    <location>
        <position position="242"/>
    </location>
</feature>
<feature type="sequence conflict" description="In Ref. 4; CAD97680." evidence="15" ref="4">
    <original>K</original>
    <variation>I</variation>
    <location>
        <position position="303"/>
    </location>
</feature>
<feature type="sequence conflict" description="In Ref. 4; CAD97687." evidence="15" ref="4">
    <original>A</original>
    <variation>G</variation>
    <location>
        <position position="344"/>
    </location>
</feature>
<keyword id="KW-0002">3D-structure</keyword>
<keyword id="KW-1003">Cell membrane</keyword>
<keyword id="KW-0225">Disease variant</keyword>
<keyword id="KW-1015">Disulfide bond</keyword>
<keyword id="KW-0297">G-protein coupled receptor</keyword>
<keyword id="KW-0325">Glycoprotein</keyword>
<keyword id="KW-1063">Hypotrichosis</keyword>
<keyword id="KW-0449">Lipoprotein</keyword>
<keyword id="KW-0472">Membrane</keyword>
<keyword id="KW-0564">Palmitate</keyword>
<keyword id="KW-1267">Proteomics identification</keyword>
<keyword id="KW-0675">Receptor</keyword>
<keyword id="KW-1185">Reference proteome</keyword>
<keyword id="KW-0807">Transducer</keyword>
<keyword id="KW-0812">Transmembrane</keyword>
<keyword id="KW-1133">Transmembrane helix</keyword>
<dbReference type="EMBL" id="L11910">
    <property type="status" value="NOT_ANNOTATED_CDS"/>
    <property type="molecule type" value="Genomic_DNA"/>
</dbReference>
<dbReference type="EMBL" id="L78805">
    <property type="protein sequence ID" value="AAL40065.1"/>
    <property type="molecule type" value="Genomic_DNA"/>
</dbReference>
<dbReference type="EMBL" id="AF000546">
    <property type="protein sequence ID" value="AAB62190.1"/>
    <property type="molecule type" value="mRNA"/>
</dbReference>
<dbReference type="EMBL" id="BX537392">
    <property type="protein sequence ID" value="CAD97634.1"/>
    <property type="molecule type" value="mRNA"/>
</dbReference>
<dbReference type="EMBL" id="BX537438">
    <property type="protein sequence ID" value="CAD97680.1"/>
    <property type="molecule type" value="mRNA"/>
</dbReference>
<dbReference type="EMBL" id="BX537445">
    <property type="protein sequence ID" value="CAD97687.1"/>
    <property type="molecule type" value="mRNA"/>
</dbReference>
<dbReference type="EMBL" id="AK122856">
    <property type="protein sequence ID" value="BAG53764.1"/>
    <property type="molecule type" value="mRNA"/>
</dbReference>
<dbReference type="EMBL" id="AK223389">
    <property type="protein sequence ID" value="BAD97109.1"/>
    <property type="molecule type" value="mRNA"/>
</dbReference>
<dbReference type="EMBL" id="HQ995530">
    <property type="protein sequence ID" value="ADZ31975.1"/>
    <property type="molecule type" value="mRNA"/>
</dbReference>
<dbReference type="EMBL" id="JF810890">
    <property type="protein sequence ID" value="AEP43757.1"/>
    <property type="molecule type" value="mRNA"/>
</dbReference>
<dbReference type="EMBL" id="AF551763">
    <property type="protein sequence ID" value="AAN64134.1"/>
    <property type="molecule type" value="Genomic_DNA"/>
</dbReference>
<dbReference type="EMBL" id="AL392048">
    <property type="status" value="NOT_ANNOTATED_CDS"/>
    <property type="molecule type" value="Genomic_DNA"/>
</dbReference>
<dbReference type="EMBL" id="CH471075">
    <property type="protein sequence ID" value="EAX08796.1"/>
    <property type="molecule type" value="Genomic_DNA"/>
</dbReference>
<dbReference type="EMBL" id="BC040850">
    <property type="protein sequence ID" value="AAH40850.1"/>
    <property type="molecule type" value="mRNA"/>
</dbReference>
<dbReference type="EMBL" id="BC045651">
    <property type="protein sequence ID" value="AAH45651.1"/>
    <property type="molecule type" value="mRNA"/>
</dbReference>
<dbReference type="EMBL" id="BC070295">
    <property type="protein sequence ID" value="AAH70295.1"/>
    <property type="molecule type" value="mRNA"/>
</dbReference>
<dbReference type="EMBL" id="BC106756">
    <property type="protein sequence ID" value="AAI06757.1"/>
    <property type="molecule type" value="mRNA"/>
</dbReference>
<dbReference type="CCDS" id="CCDS9410.1"/>
<dbReference type="PIR" id="T09508">
    <property type="entry name" value="T09508"/>
</dbReference>
<dbReference type="RefSeq" id="NP_001155969.1">
    <property type="nucleotide sequence ID" value="NM_001162497.3"/>
</dbReference>
<dbReference type="RefSeq" id="NP_001155970.1">
    <property type="nucleotide sequence ID" value="NM_001162498.3"/>
</dbReference>
<dbReference type="RefSeq" id="NP_001364245.1">
    <property type="nucleotide sequence ID" value="NM_001377316.2"/>
</dbReference>
<dbReference type="RefSeq" id="NP_001364246.1">
    <property type="nucleotide sequence ID" value="NM_001377317.2"/>
</dbReference>
<dbReference type="RefSeq" id="NP_005758.2">
    <property type="nucleotide sequence ID" value="NM_005767.5"/>
</dbReference>
<dbReference type="RefSeq" id="XP_047285975.1">
    <property type="nucleotide sequence ID" value="XM_047430019.1"/>
</dbReference>
<dbReference type="RefSeq" id="XP_047285976.1">
    <property type="nucleotide sequence ID" value="XM_047430020.1"/>
</dbReference>
<dbReference type="RefSeq" id="XP_047285977.1">
    <property type="nucleotide sequence ID" value="XM_047430021.1"/>
</dbReference>
<dbReference type="RefSeq" id="XP_047285978.1">
    <property type="nucleotide sequence ID" value="XM_047430022.1"/>
</dbReference>
<dbReference type="PDB" id="9ITB">
    <property type="method" value="EM"/>
    <property type="resolution" value="2.89 A"/>
    <property type="chains" value="R=1-294"/>
</dbReference>
<dbReference type="PDB" id="9ITE">
    <property type="method" value="EM"/>
    <property type="resolution" value="3.06 A"/>
    <property type="chains" value="R=1-301"/>
</dbReference>
<dbReference type="PDBsum" id="9ITB"/>
<dbReference type="PDBsum" id="9ITE"/>
<dbReference type="EMDB" id="EMD-60857"/>
<dbReference type="EMDB" id="EMD-60859"/>
<dbReference type="SMR" id="P43657"/>
<dbReference type="BioGRID" id="115463">
    <property type="interactions" value="67"/>
</dbReference>
<dbReference type="FunCoup" id="P43657">
    <property type="interactions" value="1377"/>
</dbReference>
<dbReference type="IntAct" id="P43657">
    <property type="interactions" value="47"/>
</dbReference>
<dbReference type="MINT" id="P43657"/>
<dbReference type="STRING" id="9606.ENSP00000367691"/>
<dbReference type="BindingDB" id="P43657"/>
<dbReference type="ChEMBL" id="CHEMBL2331058"/>
<dbReference type="DrugBank" id="DB01069">
    <property type="generic name" value="Promethazine"/>
</dbReference>
<dbReference type="GuidetoPHARMACOLOGY" id="163"/>
<dbReference type="SwissLipids" id="SLP:000001579"/>
<dbReference type="GlyCosmos" id="P43657">
    <property type="glycosylation" value="1 site, No reported glycans"/>
</dbReference>
<dbReference type="GlyGen" id="P43657">
    <property type="glycosylation" value="1 site"/>
</dbReference>
<dbReference type="iPTMnet" id="P43657"/>
<dbReference type="PhosphoSitePlus" id="P43657"/>
<dbReference type="BioMuta" id="LPAR6"/>
<dbReference type="DMDM" id="34223726"/>
<dbReference type="MassIVE" id="P43657"/>
<dbReference type="PaxDb" id="9606-ENSP00000367691"/>
<dbReference type="PeptideAtlas" id="P43657"/>
<dbReference type="ProteomicsDB" id="55648"/>
<dbReference type="Antibodypedia" id="9381">
    <property type="antibodies" value="151 antibodies from 27 providers"/>
</dbReference>
<dbReference type="DNASU" id="10161"/>
<dbReference type="Ensembl" id="ENST00000345941.2">
    <property type="protein sequence ID" value="ENSP00000344353.2"/>
    <property type="gene ID" value="ENSG00000139679.16"/>
</dbReference>
<dbReference type="Ensembl" id="ENST00000378434.8">
    <property type="protein sequence ID" value="ENSP00000367691.3"/>
    <property type="gene ID" value="ENSG00000139679.16"/>
</dbReference>
<dbReference type="Ensembl" id="ENST00000620633.5">
    <property type="protein sequence ID" value="ENSP00000482660.1"/>
    <property type="gene ID" value="ENSG00000139679.16"/>
</dbReference>
<dbReference type="GeneID" id="10161"/>
<dbReference type="KEGG" id="hsa:10161"/>
<dbReference type="MANE-Select" id="ENST00000620633.5">
    <property type="protein sequence ID" value="ENSP00000482660.1"/>
    <property type="RefSeq nucleotide sequence ID" value="NM_001162498.3"/>
    <property type="RefSeq protein sequence ID" value="NP_001155970.1"/>
</dbReference>
<dbReference type="UCSC" id="uc001vce.4">
    <property type="organism name" value="human"/>
</dbReference>
<dbReference type="AGR" id="HGNC:15520"/>
<dbReference type="CTD" id="10161"/>
<dbReference type="DisGeNET" id="10161"/>
<dbReference type="GeneCards" id="LPAR6"/>
<dbReference type="HGNC" id="HGNC:15520">
    <property type="gene designation" value="LPAR6"/>
</dbReference>
<dbReference type="HPA" id="ENSG00000139679">
    <property type="expression patterns" value="Low tissue specificity"/>
</dbReference>
<dbReference type="MalaCards" id="LPAR6"/>
<dbReference type="MIM" id="278150">
    <property type="type" value="phenotype"/>
</dbReference>
<dbReference type="MIM" id="609239">
    <property type="type" value="gene"/>
</dbReference>
<dbReference type="neXtProt" id="NX_P43657"/>
<dbReference type="OpenTargets" id="ENSG00000139679"/>
<dbReference type="Orphanet" id="55654">
    <property type="disease" value="Hypotrichosis simplex"/>
</dbReference>
<dbReference type="Orphanet" id="170">
    <property type="disease" value="Woolly hair"/>
</dbReference>
<dbReference type="PharmGKB" id="PA165505129"/>
<dbReference type="VEuPathDB" id="HostDB:ENSG00000139679"/>
<dbReference type="eggNOG" id="ENOG502QSC2">
    <property type="taxonomic scope" value="Eukaryota"/>
</dbReference>
<dbReference type="GeneTree" id="ENSGT01040000240444"/>
<dbReference type="HOGENOM" id="CLU_009579_8_2_1"/>
<dbReference type="InParanoid" id="P43657"/>
<dbReference type="OMA" id="NMYGSML"/>
<dbReference type="OrthoDB" id="5781782at2759"/>
<dbReference type="PAN-GO" id="P43657">
    <property type="GO annotations" value="4 GO annotations based on evolutionary models"/>
</dbReference>
<dbReference type="PhylomeDB" id="P43657"/>
<dbReference type="TreeFam" id="TF350009"/>
<dbReference type="PathwayCommons" id="P43657"/>
<dbReference type="Reactome" id="R-HSA-416476">
    <property type="pathway name" value="G alpha (q) signalling events"/>
</dbReference>
<dbReference type="Reactome" id="R-HSA-417957">
    <property type="pathway name" value="P2Y receptors"/>
</dbReference>
<dbReference type="SignaLink" id="P43657"/>
<dbReference type="SIGNOR" id="P43657"/>
<dbReference type="BioGRID-ORCS" id="10161">
    <property type="hits" value="12 hits in 1112 CRISPR screens"/>
</dbReference>
<dbReference type="ChiTaRS" id="LPAR6">
    <property type="organism name" value="human"/>
</dbReference>
<dbReference type="GenomeRNAi" id="10161"/>
<dbReference type="Pharos" id="P43657">
    <property type="development level" value="Tchem"/>
</dbReference>
<dbReference type="PRO" id="PR:P43657"/>
<dbReference type="Proteomes" id="UP000005640">
    <property type="component" value="Chromosome 13"/>
</dbReference>
<dbReference type="RNAct" id="P43657">
    <property type="molecule type" value="protein"/>
</dbReference>
<dbReference type="Bgee" id="ENSG00000139679">
    <property type="expression patterns" value="Expressed in gingival epithelium and 181 other cell types or tissues"/>
</dbReference>
<dbReference type="ExpressionAtlas" id="P43657">
    <property type="expression patterns" value="baseline and differential"/>
</dbReference>
<dbReference type="GO" id="GO:0043231">
    <property type="term" value="C:intracellular membrane-bounded organelle"/>
    <property type="evidence" value="ECO:0000314"/>
    <property type="project" value="HPA"/>
</dbReference>
<dbReference type="GO" id="GO:0005886">
    <property type="term" value="C:plasma membrane"/>
    <property type="evidence" value="ECO:0000314"/>
    <property type="project" value="UniProtKB"/>
</dbReference>
<dbReference type="GO" id="GO:0070915">
    <property type="term" value="F:lysophosphatidic acid receptor activity"/>
    <property type="evidence" value="ECO:0000318"/>
    <property type="project" value="GO_Central"/>
</dbReference>
<dbReference type="GO" id="GO:0001835">
    <property type="term" value="P:blastocyst hatching"/>
    <property type="evidence" value="ECO:0007669"/>
    <property type="project" value="Ensembl"/>
</dbReference>
<dbReference type="GO" id="GO:0007186">
    <property type="term" value="P:G protein-coupled receptor signaling pathway"/>
    <property type="evidence" value="ECO:0000318"/>
    <property type="project" value="GO_Central"/>
</dbReference>
<dbReference type="CDD" id="cd15156">
    <property type="entry name" value="7tmA_LPAR6_P2Y5"/>
    <property type="match status" value="1"/>
</dbReference>
<dbReference type="FunFam" id="1.20.1070.10:FF:000017">
    <property type="entry name" value="lysophosphatidic acid receptor 4"/>
    <property type="match status" value="1"/>
</dbReference>
<dbReference type="Gene3D" id="1.20.1070.10">
    <property type="entry name" value="Rhodopsin 7-helix transmembrane proteins"/>
    <property type="match status" value="1"/>
</dbReference>
<dbReference type="InterPro" id="IPR000276">
    <property type="entry name" value="GPCR_Rhodpsn"/>
</dbReference>
<dbReference type="InterPro" id="IPR017452">
    <property type="entry name" value="GPCR_Rhodpsn_7TM"/>
</dbReference>
<dbReference type="PANTHER" id="PTHR24232">
    <property type="entry name" value="G-PROTEIN COUPLED RECEPTOR"/>
    <property type="match status" value="1"/>
</dbReference>
<dbReference type="PANTHER" id="PTHR24232:SF3">
    <property type="entry name" value="LYSOPHOSPHATIDIC ACID RECEPTOR 6"/>
    <property type="match status" value="1"/>
</dbReference>
<dbReference type="Pfam" id="PF00001">
    <property type="entry name" value="7tm_1"/>
    <property type="match status" value="1"/>
</dbReference>
<dbReference type="PRINTS" id="PR00237">
    <property type="entry name" value="GPCRRHODOPSN"/>
</dbReference>
<dbReference type="PRINTS" id="PR01067">
    <property type="entry name" value="P2Y5ORPHANR"/>
</dbReference>
<dbReference type="SUPFAM" id="SSF81321">
    <property type="entry name" value="Family A G protein-coupled receptor-like"/>
    <property type="match status" value="1"/>
</dbReference>
<dbReference type="PROSITE" id="PS00237">
    <property type="entry name" value="G_PROTEIN_RECEP_F1_1"/>
    <property type="match status" value="1"/>
</dbReference>
<dbReference type="PROSITE" id="PS50262">
    <property type="entry name" value="G_PROTEIN_RECEP_F1_2"/>
    <property type="match status" value="1"/>
</dbReference>